<evidence type="ECO:0000255" key="1">
    <source>
        <dbReference type="HAMAP-Rule" id="MF_00131"/>
    </source>
</evidence>
<feature type="chain" id="PRO_1000018168" description="Tryptophan synthase alpha chain">
    <location>
        <begin position="1"/>
        <end position="258"/>
    </location>
</feature>
<feature type="active site" description="Proton acceptor" evidence="1">
    <location>
        <position position="47"/>
    </location>
</feature>
<feature type="active site" description="Proton acceptor" evidence="1">
    <location>
        <position position="58"/>
    </location>
</feature>
<reference key="1">
    <citation type="journal article" date="2007" name="J. Bacteriol.">
        <title>The complete genome sequence of Bacillus thuringiensis Al Hakam.</title>
        <authorList>
            <person name="Challacombe J.F."/>
            <person name="Altherr M.R."/>
            <person name="Xie G."/>
            <person name="Bhotika S.S."/>
            <person name="Brown N."/>
            <person name="Bruce D."/>
            <person name="Campbell C.S."/>
            <person name="Campbell M.L."/>
            <person name="Chen J."/>
            <person name="Chertkov O."/>
            <person name="Cleland C."/>
            <person name="Dimitrijevic M."/>
            <person name="Doggett N.A."/>
            <person name="Fawcett J.J."/>
            <person name="Glavina T."/>
            <person name="Goodwin L.A."/>
            <person name="Green L.D."/>
            <person name="Han C.S."/>
            <person name="Hill K.K."/>
            <person name="Hitchcock P."/>
            <person name="Jackson P.J."/>
            <person name="Keim P."/>
            <person name="Kewalramani A.R."/>
            <person name="Longmire J."/>
            <person name="Lucas S."/>
            <person name="Malfatti S."/>
            <person name="Martinez D."/>
            <person name="McMurry K."/>
            <person name="Meincke L.J."/>
            <person name="Misra M."/>
            <person name="Moseman B.L."/>
            <person name="Mundt M."/>
            <person name="Munk A.C."/>
            <person name="Okinaka R.T."/>
            <person name="Parson-Quintana B."/>
            <person name="Reilly L.P."/>
            <person name="Richardson P."/>
            <person name="Robinson D.L."/>
            <person name="Saunders E."/>
            <person name="Tapia R."/>
            <person name="Tesmer J.G."/>
            <person name="Thayer N."/>
            <person name="Thompson L.S."/>
            <person name="Tice H."/>
            <person name="Ticknor L.O."/>
            <person name="Wills P.L."/>
            <person name="Gilna P."/>
            <person name="Brettin T.S."/>
        </authorList>
    </citation>
    <scope>NUCLEOTIDE SEQUENCE [LARGE SCALE GENOMIC DNA]</scope>
    <source>
        <strain>Al Hakam</strain>
    </source>
</reference>
<gene>
    <name evidence="1" type="primary">trpA</name>
    <name type="ordered locus">BALH_1101</name>
</gene>
<sequence length="258" mass="28385">MGVERIKAAFENGKKAFIPYVMGGDGGLEILKERIRFLDEAGASIVEIGIPFSDPVADGPTIQRAGKRALDSGVTVKGIFQALIEVRKEVQIPFVLMTYLNPVLAFGKERFIENCMEAGVDGIIVPDLPYEEQDIIAPLLREANIALIPLVTVTSPIERIKKIMSESEGFVYAVTVAGVTGVRQNFKDEIHSYLEKVKSHTHLPVVAGFGISTKEHVEEMVTICDGVVVGSKVIELLENEKREEICEFIQATKQKEEA</sequence>
<protein>
    <recommendedName>
        <fullName evidence="1">Tryptophan synthase alpha chain</fullName>
        <ecNumber evidence="1">4.2.1.20</ecNumber>
    </recommendedName>
</protein>
<name>TRPA_BACAH</name>
<proteinExistence type="inferred from homology"/>
<keyword id="KW-0028">Amino-acid biosynthesis</keyword>
<keyword id="KW-0057">Aromatic amino acid biosynthesis</keyword>
<keyword id="KW-0456">Lyase</keyword>
<keyword id="KW-0822">Tryptophan biosynthesis</keyword>
<accession>A0RB65</accession>
<organism>
    <name type="scientific">Bacillus thuringiensis (strain Al Hakam)</name>
    <dbReference type="NCBI Taxonomy" id="412694"/>
    <lineage>
        <taxon>Bacteria</taxon>
        <taxon>Bacillati</taxon>
        <taxon>Bacillota</taxon>
        <taxon>Bacilli</taxon>
        <taxon>Bacillales</taxon>
        <taxon>Bacillaceae</taxon>
        <taxon>Bacillus</taxon>
        <taxon>Bacillus cereus group</taxon>
    </lineage>
</organism>
<dbReference type="EC" id="4.2.1.20" evidence="1"/>
<dbReference type="EMBL" id="CP000485">
    <property type="protein sequence ID" value="ABK84458.1"/>
    <property type="molecule type" value="Genomic_DNA"/>
</dbReference>
<dbReference type="RefSeq" id="WP_000537935.1">
    <property type="nucleotide sequence ID" value="NC_008600.1"/>
</dbReference>
<dbReference type="SMR" id="A0RB65"/>
<dbReference type="KEGG" id="btl:BALH_1101"/>
<dbReference type="HOGENOM" id="CLU_016734_0_0_9"/>
<dbReference type="UniPathway" id="UPA00035">
    <property type="reaction ID" value="UER00044"/>
</dbReference>
<dbReference type="GO" id="GO:0005829">
    <property type="term" value="C:cytosol"/>
    <property type="evidence" value="ECO:0007669"/>
    <property type="project" value="TreeGrafter"/>
</dbReference>
<dbReference type="GO" id="GO:0004834">
    <property type="term" value="F:tryptophan synthase activity"/>
    <property type="evidence" value="ECO:0007669"/>
    <property type="project" value="UniProtKB-UniRule"/>
</dbReference>
<dbReference type="CDD" id="cd04724">
    <property type="entry name" value="Tryptophan_synthase_alpha"/>
    <property type="match status" value="1"/>
</dbReference>
<dbReference type="FunFam" id="3.20.20.70:FF:000037">
    <property type="entry name" value="Tryptophan synthase alpha chain"/>
    <property type="match status" value="1"/>
</dbReference>
<dbReference type="Gene3D" id="3.20.20.70">
    <property type="entry name" value="Aldolase class I"/>
    <property type="match status" value="1"/>
</dbReference>
<dbReference type="HAMAP" id="MF_00131">
    <property type="entry name" value="Trp_synth_alpha"/>
    <property type="match status" value="1"/>
</dbReference>
<dbReference type="InterPro" id="IPR013785">
    <property type="entry name" value="Aldolase_TIM"/>
</dbReference>
<dbReference type="InterPro" id="IPR011060">
    <property type="entry name" value="RibuloseP-bd_barrel"/>
</dbReference>
<dbReference type="InterPro" id="IPR018204">
    <property type="entry name" value="Trp_synthase_alpha_AS"/>
</dbReference>
<dbReference type="InterPro" id="IPR002028">
    <property type="entry name" value="Trp_synthase_suA"/>
</dbReference>
<dbReference type="NCBIfam" id="TIGR00262">
    <property type="entry name" value="trpA"/>
    <property type="match status" value="1"/>
</dbReference>
<dbReference type="PANTHER" id="PTHR43406:SF1">
    <property type="entry name" value="TRYPTOPHAN SYNTHASE ALPHA CHAIN, CHLOROPLASTIC"/>
    <property type="match status" value="1"/>
</dbReference>
<dbReference type="PANTHER" id="PTHR43406">
    <property type="entry name" value="TRYPTOPHAN SYNTHASE, ALPHA CHAIN"/>
    <property type="match status" value="1"/>
</dbReference>
<dbReference type="Pfam" id="PF00290">
    <property type="entry name" value="Trp_syntA"/>
    <property type="match status" value="1"/>
</dbReference>
<dbReference type="SUPFAM" id="SSF51366">
    <property type="entry name" value="Ribulose-phoshate binding barrel"/>
    <property type="match status" value="1"/>
</dbReference>
<dbReference type="PROSITE" id="PS00167">
    <property type="entry name" value="TRP_SYNTHASE_ALPHA"/>
    <property type="match status" value="1"/>
</dbReference>
<comment type="function">
    <text evidence="1">The alpha subunit is responsible for the aldol cleavage of indoleglycerol phosphate to indole and glyceraldehyde 3-phosphate.</text>
</comment>
<comment type="catalytic activity">
    <reaction evidence="1">
        <text>(1S,2R)-1-C-(indol-3-yl)glycerol 3-phosphate + L-serine = D-glyceraldehyde 3-phosphate + L-tryptophan + H2O</text>
        <dbReference type="Rhea" id="RHEA:10532"/>
        <dbReference type="ChEBI" id="CHEBI:15377"/>
        <dbReference type="ChEBI" id="CHEBI:33384"/>
        <dbReference type="ChEBI" id="CHEBI:57912"/>
        <dbReference type="ChEBI" id="CHEBI:58866"/>
        <dbReference type="ChEBI" id="CHEBI:59776"/>
        <dbReference type="EC" id="4.2.1.20"/>
    </reaction>
</comment>
<comment type="pathway">
    <text evidence="1">Amino-acid biosynthesis; L-tryptophan biosynthesis; L-tryptophan from chorismate: step 5/5.</text>
</comment>
<comment type="subunit">
    <text evidence="1">Tetramer of two alpha and two beta chains.</text>
</comment>
<comment type="similarity">
    <text evidence="1">Belongs to the TrpA family.</text>
</comment>